<proteinExistence type="evidence at transcript level"/>
<dbReference type="EMBL" id="AF069298">
    <property type="protein sequence ID" value="AAC19288.1"/>
    <property type="status" value="ALT_SEQ"/>
    <property type="molecule type" value="Genomic_DNA"/>
</dbReference>
<dbReference type="EMBL" id="AL161494">
    <property type="protein sequence ID" value="CAB80736.1"/>
    <property type="status" value="ALT_SEQ"/>
    <property type="molecule type" value="Genomic_DNA"/>
</dbReference>
<dbReference type="EMBL" id="CP002687">
    <property type="protein sequence ID" value="AEE82171.1"/>
    <property type="molecule type" value="Genomic_DNA"/>
</dbReference>
<dbReference type="EMBL" id="AK118074">
    <property type="protein sequence ID" value="BAC42705.1"/>
    <property type="molecule type" value="mRNA"/>
</dbReference>
<dbReference type="EMBL" id="AK319068">
    <property type="protein sequence ID" value="BAH57183.1"/>
    <property type="molecule type" value="mRNA"/>
</dbReference>
<dbReference type="PIR" id="T01307">
    <property type="entry name" value="T01307"/>
</dbReference>
<dbReference type="RefSeq" id="NP_849537.1">
    <molecule id="F4JHI7-2"/>
    <property type="nucleotide sequence ID" value="NM_179206.3"/>
</dbReference>
<dbReference type="SMR" id="F4JHI7"/>
<dbReference type="BioGRID" id="13318">
    <property type="interactions" value="3"/>
</dbReference>
<dbReference type="FunCoup" id="F4JHI7">
    <property type="interactions" value="3836"/>
</dbReference>
<dbReference type="STRING" id="3702.F4JHI7"/>
<dbReference type="PaxDb" id="3702-AT4G02430.2"/>
<dbReference type="EnsemblPlants" id="AT4G02430.1">
    <molecule id="F4JHI7-2"/>
    <property type="protein sequence ID" value="AT4G02430.1"/>
    <property type="gene ID" value="AT4G02430"/>
</dbReference>
<dbReference type="GeneID" id="828027"/>
<dbReference type="Gramene" id="AT4G02430.1">
    <molecule id="F4JHI7-2"/>
    <property type="protein sequence ID" value="AT4G02430.1"/>
    <property type="gene ID" value="AT4G02430"/>
</dbReference>
<dbReference type="KEGG" id="ath:AT4G02430"/>
<dbReference type="Araport" id="AT4G02430"/>
<dbReference type="TAIR" id="AT4G02430">
    <property type="gene designation" value="SR34B"/>
</dbReference>
<dbReference type="eggNOG" id="KOG0105">
    <property type="taxonomic scope" value="Eukaryota"/>
</dbReference>
<dbReference type="HOGENOM" id="CLU_012062_34_0_1"/>
<dbReference type="InParanoid" id="F4JHI7"/>
<dbReference type="PhylomeDB" id="F4JHI7"/>
<dbReference type="PRO" id="PR:F4JHI7"/>
<dbReference type="Proteomes" id="UP000006548">
    <property type="component" value="Chromosome 4"/>
</dbReference>
<dbReference type="ExpressionAtlas" id="F4JHI7">
    <property type="expression patterns" value="baseline and differential"/>
</dbReference>
<dbReference type="GO" id="GO:0016607">
    <property type="term" value="C:nuclear speck"/>
    <property type="evidence" value="ECO:0007669"/>
    <property type="project" value="UniProtKB-SubCell"/>
</dbReference>
<dbReference type="GO" id="GO:0005681">
    <property type="term" value="C:spliceosomal complex"/>
    <property type="evidence" value="ECO:0007669"/>
    <property type="project" value="UniProtKB-KW"/>
</dbReference>
<dbReference type="GO" id="GO:0003723">
    <property type="term" value="F:RNA binding"/>
    <property type="evidence" value="ECO:0007669"/>
    <property type="project" value="UniProtKB-KW"/>
</dbReference>
<dbReference type="GO" id="GO:0006397">
    <property type="term" value="P:mRNA processing"/>
    <property type="evidence" value="ECO:0007669"/>
    <property type="project" value="UniProtKB-KW"/>
</dbReference>
<dbReference type="GO" id="GO:0008380">
    <property type="term" value="P:RNA splicing"/>
    <property type="evidence" value="ECO:0007669"/>
    <property type="project" value="UniProtKB-KW"/>
</dbReference>
<dbReference type="CDD" id="cd12599">
    <property type="entry name" value="RRM1_SF2_plant_like"/>
    <property type="match status" value="1"/>
</dbReference>
<dbReference type="CDD" id="cd12602">
    <property type="entry name" value="RRM2_SF2_plant_like"/>
    <property type="match status" value="1"/>
</dbReference>
<dbReference type="FunFam" id="3.30.70.330:FF:000410">
    <property type="entry name" value="ASF/SF2-like pre-mRNA splicing factor SRP31"/>
    <property type="match status" value="1"/>
</dbReference>
<dbReference type="FunFam" id="3.30.70.330:FF:000062">
    <property type="entry name" value="serine/arginine-rich splicing factor SR34A-like"/>
    <property type="match status" value="1"/>
</dbReference>
<dbReference type="Gene3D" id="3.30.70.330">
    <property type="match status" value="2"/>
</dbReference>
<dbReference type="InterPro" id="IPR012677">
    <property type="entry name" value="Nucleotide-bd_a/b_plait_sf"/>
</dbReference>
<dbReference type="InterPro" id="IPR035979">
    <property type="entry name" value="RBD_domain_sf"/>
</dbReference>
<dbReference type="InterPro" id="IPR000504">
    <property type="entry name" value="RRM_dom"/>
</dbReference>
<dbReference type="InterPro" id="IPR050374">
    <property type="entry name" value="RRT5_SRSF_SR"/>
</dbReference>
<dbReference type="PANTHER" id="PTHR23003">
    <property type="entry name" value="RNA RECOGNITION MOTIF RRM DOMAIN CONTAINING PROTEIN"/>
    <property type="match status" value="1"/>
</dbReference>
<dbReference type="PANTHER" id="PTHR23003:SF62">
    <property type="entry name" value="SERINE_ARGININE (SR)-TYPE SHUTTLING MRNA BINDING PROTEIN NPL3"/>
    <property type="match status" value="1"/>
</dbReference>
<dbReference type="Pfam" id="PF00076">
    <property type="entry name" value="RRM_1"/>
    <property type="match status" value="2"/>
</dbReference>
<dbReference type="SMART" id="SM00360">
    <property type="entry name" value="RRM"/>
    <property type="match status" value="2"/>
</dbReference>
<dbReference type="SUPFAM" id="SSF54928">
    <property type="entry name" value="RNA-binding domain, RBD"/>
    <property type="match status" value="1"/>
</dbReference>
<dbReference type="PROSITE" id="PS50102">
    <property type="entry name" value="RRM"/>
    <property type="match status" value="2"/>
</dbReference>
<sequence length="278" mass="31450">MSSRSSRTIYVGNLPGDIREREVEDLFSKYGPVVQIDLKIPPRPPGYAFVEFEDARDADDAIYGRDGYDFDGHHLRVELAHGGRRSSHDARGSYSGRGRGGRGGGDGGGRERGPSRRSEYRVVVSGLPSSASWQDLKDHMRKGGEVCFSQVFRDGRGTTGIVDYTSYEDMKYALDDTEFRNAFSHEYVRVREYDSRRDSRSPSRGRSYSKSRSRGRSPSRSRSRSRSRSKSRSPKAKSLRRSPAKSTSRSPRSRSRSKSRSLSPRGWVTVERHWIALI</sequence>
<organism>
    <name type="scientific">Arabidopsis thaliana</name>
    <name type="common">Mouse-ear cress</name>
    <dbReference type="NCBI Taxonomy" id="3702"/>
    <lineage>
        <taxon>Eukaryota</taxon>
        <taxon>Viridiplantae</taxon>
        <taxon>Streptophyta</taxon>
        <taxon>Embryophyta</taxon>
        <taxon>Tracheophyta</taxon>
        <taxon>Spermatophyta</taxon>
        <taxon>Magnoliopsida</taxon>
        <taxon>eudicotyledons</taxon>
        <taxon>Gunneridae</taxon>
        <taxon>Pentapetalae</taxon>
        <taxon>rosids</taxon>
        <taxon>malvids</taxon>
        <taxon>Brassicales</taxon>
        <taxon>Brassicaceae</taxon>
        <taxon>Camelineae</taxon>
        <taxon>Arabidopsis</taxon>
    </lineage>
</organism>
<protein>
    <recommendedName>
        <fullName>Serine/arginine-rich splicing factor SR34B</fullName>
        <shortName>At-SR34B</shortName>
        <shortName>At-SRp34B</shortName>
        <shortName>AtSR34B</shortName>
    </recommendedName>
    <alternativeName>
        <fullName>SER/ARG-rich protein 34B</fullName>
    </alternativeName>
</protein>
<keyword id="KW-0025">Alternative splicing</keyword>
<keyword id="KW-0507">mRNA processing</keyword>
<keyword id="KW-0508">mRNA splicing</keyword>
<keyword id="KW-0539">Nucleus</keyword>
<keyword id="KW-0597">Phosphoprotein</keyword>
<keyword id="KW-1185">Reference proteome</keyword>
<keyword id="KW-0677">Repeat</keyword>
<keyword id="KW-0694">RNA-binding</keyword>
<keyword id="KW-0747">Spliceosome</keyword>
<feature type="chain" id="PRO_0000429597" description="Serine/arginine-rich splicing factor SR34B">
    <location>
        <begin position="1"/>
        <end position="278"/>
    </location>
</feature>
<feature type="domain" description="RRM 1" evidence="7">
    <location>
        <begin position="7"/>
        <end position="82"/>
    </location>
</feature>
<feature type="domain" description="RRM 2" evidence="7">
    <location>
        <begin position="120"/>
        <end position="195"/>
    </location>
</feature>
<feature type="region of interest" description="Disordered" evidence="8">
    <location>
        <begin position="81"/>
        <end position="121"/>
    </location>
</feature>
<feature type="region of interest" description="Disordered" evidence="8">
    <location>
        <begin position="192"/>
        <end position="263"/>
    </location>
</feature>
<feature type="compositionally biased region" description="Basic and acidic residues" evidence="8">
    <location>
        <begin position="81"/>
        <end position="91"/>
    </location>
</feature>
<feature type="compositionally biased region" description="Gly residues" evidence="8">
    <location>
        <begin position="95"/>
        <end position="107"/>
    </location>
</feature>
<feature type="compositionally biased region" description="Basic and acidic residues" evidence="8">
    <location>
        <begin position="108"/>
        <end position="120"/>
    </location>
</feature>
<feature type="compositionally biased region" description="Basic and acidic residues" evidence="8">
    <location>
        <begin position="192"/>
        <end position="201"/>
    </location>
</feature>
<feature type="compositionally biased region" description="Basic residues" evidence="8">
    <location>
        <begin position="207"/>
        <end position="243"/>
    </location>
</feature>
<feature type="modified residue" description="Phosphoserine" evidence="2">
    <location>
        <position position="201"/>
    </location>
</feature>
<feature type="modified residue" description="Phosphoserine" evidence="2">
    <location>
        <position position="203"/>
    </location>
</feature>
<feature type="modified residue" description="Phosphoserine" evidence="2">
    <location>
        <position position="225"/>
    </location>
</feature>
<feature type="modified residue" description="Phosphoserine" evidence="4">
    <location>
        <position position="231"/>
    </location>
</feature>
<feature type="modified residue" description="Phosphoserine" evidence="3">
    <location>
        <position position="233"/>
    </location>
</feature>
<feature type="modified residue" description="Phosphoserine" evidence="6">
    <location>
        <position position="242"/>
    </location>
</feature>
<feature type="modified residue" description="Phosphoserine" evidence="4">
    <location>
        <position position="250"/>
    </location>
</feature>
<feature type="modified residue" description="Phosphoserine" evidence="5">
    <location>
        <position position="259"/>
    </location>
</feature>
<feature type="modified residue" description="Phosphoserine" evidence="3">
    <location>
        <position position="263"/>
    </location>
</feature>
<feature type="splice variant" id="VSP_054991" description="In isoform 3." evidence="10">
    <original>MSSRSSRTIYVGNLPGDIREREVEDLFS</original>
    <variation>MHLRNCWILILFGRSFLKNCSSLFFL</variation>
    <location>
        <begin position="1"/>
        <end position="28"/>
    </location>
</feature>
<feature type="splice variant" id="VSP_054992" description="In isoform 2 and isoform 3." evidence="9 10">
    <original>LDDTEFRNAFSHEYVRVREYDSRRDSRSPSRGRSYSKSRSRGRSPSRSRSRSRSRSKSRSPKAKSLRRSPAKSTSRSPRSRSRSKSRSLSPRGWVTVERHWIALI</original>
    <variation>IKKAR</variation>
    <location>
        <begin position="174"/>
        <end position="278"/>
    </location>
</feature>
<gene>
    <name type="primary">SR34B</name>
    <name type="synonym">SRP34B</name>
    <name type="ordered locus">At4g02430</name>
    <name type="ORF">T14P8.21</name>
</gene>
<accession>F4JHI7</accession>
<accession>C0Z3A4</accession>
<accession>O81290</accession>
<accession>Q8GXS0</accession>
<reference key="1">
    <citation type="journal article" date="1999" name="Nature">
        <title>Sequence and analysis of chromosome 4 of the plant Arabidopsis thaliana.</title>
        <authorList>
            <person name="Mayer K.F.X."/>
            <person name="Schueller C."/>
            <person name="Wambutt R."/>
            <person name="Murphy G."/>
            <person name="Volckaert G."/>
            <person name="Pohl T."/>
            <person name="Duesterhoeft A."/>
            <person name="Stiekema W."/>
            <person name="Entian K.-D."/>
            <person name="Terryn N."/>
            <person name="Harris B."/>
            <person name="Ansorge W."/>
            <person name="Brandt P."/>
            <person name="Grivell L.A."/>
            <person name="Rieger M."/>
            <person name="Weichselgartner M."/>
            <person name="de Simone V."/>
            <person name="Obermaier B."/>
            <person name="Mache R."/>
            <person name="Mueller M."/>
            <person name="Kreis M."/>
            <person name="Delseny M."/>
            <person name="Puigdomenech P."/>
            <person name="Watson M."/>
            <person name="Schmidtheini T."/>
            <person name="Reichert B."/>
            <person name="Portetelle D."/>
            <person name="Perez-Alonso M."/>
            <person name="Boutry M."/>
            <person name="Bancroft I."/>
            <person name="Vos P."/>
            <person name="Hoheisel J."/>
            <person name="Zimmermann W."/>
            <person name="Wedler H."/>
            <person name="Ridley P."/>
            <person name="Langham S.-A."/>
            <person name="McCullagh B."/>
            <person name="Bilham L."/>
            <person name="Robben J."/>
            <person name="van der Schueren J."/>
            <person name="Grymonprez B."/>
            <person name="Chuang Y.-J."/>
            <person name="Vandenbussche F."/>
            <person name="Braeken M."/>
            <person name="Weltjens I."/>
            <person name="Voet M."/>
            <person name="Bastiaens I."/>
            <person name="Aert R."/>
            <person name="Defoor E."/>
            <person name="Weitzenegger T."/>
            <person name="Bothe G."/>
            <person name="Ramsperger U."/>
            <person name="Hilbert H."/>
            <person name="Braun M."/>
            <person name="Holzer E."/>
            <person name="Brandt A."/>
            <person name="Peters S."/>
            <person name="van Staveren M."/>
            <person name="Dirkse W."/>
            <person name="Mooijman P."/>
            <person name="Klein Lankhorst R."/>
            <person name="Rose M."/>
            <person name="Hauf J."/>
            <person name="Koetter P."/>
            <person name="Berneiser S."/>
            <person name="Hempel S."/>
            <person name="Feldpausch M."/>
            <person name="Lamberth S."/>
            <person name="Van den Daele H."/>
            <person name="De Keyser A."/>
            <person name="Buysshaert C."/>
            <person name="Gielen J."/>
            <person name="Villarroel R."/>
            <person name="De Clercq R."/>
            <person name="van Montagu M."/>
            <person name="Rogers J."/>
            <person name="Cronin A."/>
            <person name="Quail M.A."/>
            <person name="Bray-Allen S."/>
            <person name="Clark L."/>
            <person name="Doggett J."/>
            <person name="Hall S."/>
            <person name="Kay M."/>
            <person name="Lennard N."/>
            <person name="McLay K."/>
            <person name="Mayes R."/>
            <person name="Pettett A."/>
            <person name="Rajandream M.A."/>
            <person name="Lyne M."/>
            <person name="Benes V."/>
            <person name="Rechmann S."/>
            <person name="Borkova D."/>
            <person name="Bloecker H."/>
            <person name="Scharfe M."/>
            <person name="Grimm M."/>
            <person name="Loehnert T.-H."/>
            <person name="Dose S."/>
            <person name="de Haan M."/>
            <person name="Maarse A.C."/>
            <person name="Schaefer M."/>
            <person name="Mueller-Auer S."/>
            <person name="Gabel C."/>
            <person name="Fuchs M."/>
            <person name="Fartmann B."/>
            <person name="Granderath K."/>
            <person name="Dauner D."/>
            <person name="Herzl A."/>
            <person name="Neumann S."/>
            <person name="Argiriou A."/>
            <person name="Vitale D."/>
            <person name="Liguori R."/>
            <person name="Piravandi E."/>
            <person name="Massenet O."/>
            <person name="Quigley F."/>
            <person name="Clabauld G."/>
            <person name="Muendlein A."/>
            <person name="Felber R."/>
            <person name="Schnabl S."/>
            <person name="Hiller R."/>
            <person name="Schmidt W."/>
            <person name="Lecharny A."/>
            <person name="Aubourg S."/>
            <person name="Chefdor F."/>
            <person name="Cooke R."/>
            <person name="Berger C."/>
            <person name="Monfort A."/>
            <person name="Casacuberta E."/>
            <person name="Gibbons T."/>
            <person name="Weber N."/>
            <person name="Vandenbol M."/>
            <person name="Bargues M."/>
            <person name="Terol J."/>
            <person name="Torres A."/>
            <person name="Perez-Perez A."/>
            <person name="Purnelle B."/>
            <person name="Bent E."/>
            <person name="Johnson S."/>
            <person name="Tacon D."/>
            <person name="Jesse T."/>
            <person name="Heijnen L."/>
            <person name="Schwarz S."/>
            <person name="Scholler P."/>
            <person name="Heber S."/>
            <person name="Francs P."/>
            <person name="Bielke C."/>
            <person name="Frishman D."/>
            <person name="Haase D."/>
            <person name="Lemcke K."/>
            <person name="Mewes H.-W."/>
            <person name="Stocker S."/>
            <person name="Zaccaria P."/>
            <person name="Bevan M."/>
            <person name="Wilson R.K."/>
            <person name="de la Bastide M."/>
            <person name="Habermann K."/>
            <person name="Parnell L."/>
            <person name="Dedhia N."/>
            <person name="Gnoj L."/>
            <person name="Schutz K."/>
            <person name="Huang E."/>
            <person name="Spiegel L."/>
            <person name="Sekhon M."/>
            <person name="Murray J."/>
            <person name="Sheet P."/>
            <person name="Cordes M."/>
            <person name="Abu-Threideh J."/>
            <person name="Stoneking T."/>
            <person name="Kalicki J."/>
            <person name="Graves T."/>
            <person name="Harmon G."/>
            <person name="Edwards J."/>
            <person name="Latreille P."/>
            <person name="Courtney L."/>
            <person name="Cloud J."/>
            <person name="Abbott A."/>
            <person name="Scott K."/>
            <person name="Johnson D."/>
            <person name="Minx P."/>
            <person name="Bentley D."/>
            <person name="Fulton B."/>
            <person name="Miller N."/>
            <person name="Greco T."/>
            <person name="Kemp K."/>
            <person name="Kramer J."/>
            <person name="Fulton L."/>
            <person name="Mardis E."/>
            <person name="Dante M."/>
            <person name="Pepin K."/>
            <person name="Hillier L.W."/>
            <person name="Nelson J."/>
            <person name="Spieth J."/>
            <person name="Ryan E."/>
            <person name="Andrews S."/>
            <person name="Geisel C."/>
            <person name="Layman D."/>
            <person name="Du H."/>
            <person name="Ali J."/>
            <person name="Berghoff A."/>
            <person name="Jones K."/>
            <person name="Drone K."/>
            <person name="Cotton M."/>
            <person name="Joshu C."/>
            <person name="Antonoiu B."/>
            <person name="Zidanic M."/>
            <person name="Strong C."/>
            <person name="Sun H."/>
            <person name="Lamar B."/>
            <person name="Yordan C."/>
            <person name="Ma P."/>
            <person name="Zhong J."/>
            <person name="Preston R."/>
            <person name="Vil D."/>
            <person name="Shekher M."/>
            <person name="Matero A."/>
            <person name="Shah R."/>
            <person name="Swaby I.K."/>
            <person name="O'Shaughnessy A."/>
            <person name="Rodriguez M."/>
            <person name="Hoffman J."/>
            <person name="Till S."/>
            <person name="Granat S."/>
            <person name="Shohdy N."/>
            <person name="Hasegawa A."/>
            <person name="Hameed A."/>
            <person name="Lodhi M."/>
            <person name="Johnson A."/>
            <person name="Chen E."/>
            <person name="Marra M.A."/>
            <person name="Martienssen R."/>
            <person name="McCombie W.R."/>
        </authorList>
    </citation>
    <scope>NUCLEOTIDE SEQUENCE [LARGE SCALE GENOMIC DNA]</scope>
    <source>
        <strain>cv. Columbia</strain>
    </source>
</reference>
<reference key="2">
    <citation type="journal article" date="2017" name="Plant J.">
        <title>Araport11: a complete reannotation of the Arabidopsis thaliana reference genome.</title>
        <authorList>
            <person name="Cheng C.Y."/>
            <person name="Krishnakumar V."/>
            <person name="Chan A.P."/>
            <person name="Thibaud-Nissen F."/>
            <person name="Schobel S."/>
            <person name="Town C.D."/>
        </authorList>
    </citation>
    <scope>GENOME REANNOTATION</scope>
    <source>
        <strain>cv. Columbia</strain>
    </source>
</reference>
<reference key="3">
    <citation type="journal article" date="2002" name="Science">
        <title>Functional annotation of a full-length Arabidopsis cDNA collection.</title>
        <authorList>
            <person name="Seki M."/>
            <person name="Narusaka M."/>
            <person name="Kamiya A."/>
            <person name="Ishida J."/>
            <person name="Satou M."/>
            <person name="Sakurai T."/>
            <person name="Nakajima M."/>
            <person name="Enju A."/>
            <person name="Akiyama K."/>
            <person name="Oono Y."/>
            <person name="Muramatsu M."/>
            <person name="Hayashizaki Y."/>
            <person name="Kawai J."/>
            <person name="Carninci P."/>
            <person name="Itoh M."/>
            <person name="Ishii Y."/>
            <person name="Arakawa T."/>
            <person name="Shibata K."/>
            <person name="Shinagawa A."/>
            <person name="Shinozaki K."/>
        </authorList>
    </citation>
    <scope>NUCLEOTIDE SEQUENCE [LARGE SCALE MRNA] (ISOFORM 2)</scope>
    <source>
        <strain>cv. Columbia</strain>
    </source>
</reference>
<reference key="4">
    <citation type="journal article" date="2009" name="DNA Res.">
        <title>Analysis of multiple occurrences of alternative splicing events in Arabidopsis thaliana using novel sequenced full-length cDNAs.</title>
        <authorList>
            <person name="Iida K."/>
            <person name="Fukami-Kobayashi K."/>
            <person name="Toyoda A."/>
            <person name="Sakaki Y."/>
            <person name="Kobayashi M."/>
            <person name="Seki M."/>
            <person name="Shinozaki K."/>
        </authorList>
    </citation>
    <scope>NUCLEOTIDE SEQUENCE [LARGE SCALE MRNA] (ISOFORM 3)</scope>
    <source>
        <strain>cv. Columbia</strain>
    </source>
</reference>
<reference key="5">
    <citation type="journal article" date="2007" name="Plant J.">
        <title>Alternative splicing of pre-mRNAs of Arabidopsis serine/arginine-rich proteins: regulation by hormones and stresses.</title>
        <authorList>
            <person name="Palusa S.G."/>
            <person name="Ali G.S."/>
            <person name="Reddy A.S."/>
        </authorList>
    </citation>
    <scope>ALTERNATIVE SPLICING</scope>
    <scope>INDUCTION</scope>
</reference>
<reference key="6">
    <citation type="journal article" date="2011" name="PLoS ONE">
        <title>Comparative analysis of serine/arginine-rich proteins across 27 eukaryotes: insights into sub-family classification and extent of alternative splicing.</title>
        <authorList>
            <person name="Richardson D.N."/>
            <person name="Rogers M.F."/>
            <person name="Labadorf A."/>
            <person name="Ben-Hur A."/>
            <person name="Guo H."/>
            <person name="Paterson A.H."/>
            <person name="Reddy A.S.N."/>
        </authorList>
    </citation>
    <scope>GENE FAMILY</scope>
</reference>
<evidence type="ECO:0000250" key="1">
    <source>
        <dbReference type="UniProtKB" id="O22315"/>
    </source>
</evidence>
<evidence type="ECO:0000250" key="2">
    <source>
        <dbReference type="UniProtKB" id="P92964"/>
    </source>
</evidence>
<evidence type="ECO:0000250" key="3">
    <source>
        <dbReference type="UniProtKB" id="P92966"/>
    </source>
</evidence>
<evidence type="ECO:0000250" key="4">
    <source>
        <dbReference type="UniProtKB" id="Q8VYA5"/>
    </source>
</evidence>
<evidence type="ECO:0000250" key="5">
    <source>
        <dbReference type="UniProtKB" id="Q9FYB7"/>
    </source>
</evidence>
<evidence type="ECO:0000250" key="6">
    <source>
        <dbReference type="UniProtKB" id="Q9SJA6"/>
    </source>
</evidence>
<evidence type="ECO:0000255" key="7">
    <source>
        <dbReference type="PROSITE-ProRule" id="PRU00176"/>
    </source>
</evidence>
<evidence type="ECO:0000256" key="8">
    <source>
        <dbReference type="SAM" id="MobiDB-lite"/>
    </source>
</evidence>
<evidence type="ECO:0000303" key="9">
    <source>
    </source>
</evidence>
<evidence type="ECO:0000303" key="10">
    <source>
    </source>
</evidence>
<evidence type="ECO:0000305" key="11"/>
<evidence type="ECO:0000305" key="12">
    <source>
    </source>
</evidence>
<name>SR34B_ARATH</name>
<comment type="function">
    <text>Probably involved in intron recognition and spliceosome assembly.</text>
</comment>
<comment type="subunit">
    <text>Component of the spliceosome.</text>
</comment>
<comment type="subcellular location">
    <subcellularLocation>
        <location evidence="1">Nucleus speckle</location>
    </subcellularLocation>
    <subcellularLocation>
        <location evidence="1">Nucleus</location>
        <location evidence="1">Nucleoplasm</location>
    </subcellularLocation>
</comment>
<comment type="alternative products">
    <event type="alternative splicing"/>
    <isoform>
        <id>F4JHI7-1</id>
        <name>1</name>
        <sequence type="displayed"/>
    </isoform>
    <isoform>
        <id>F4JHI7-2</id>
        <name>2</name>
        <sequence type="described" ref="VSP_054992"/>
    </isoform>
    <isoform>
        <id>F4JHI7-3</id>
        <name>3</name>
        <sequence type="described" ref="VSP_054991 VSP_054992"/>
    </isoform>
</comment>
<comment type="miscellaneous">
    <text evidence="12">The splicing pattern of the pre-mRNA is regulated in a tissue-specific manner and by development, and changes in response to various types of abiotic stresses.</text>
</comment>
<comment type="similarity">
    <text evidence="11">Belongs to the splicing factor SR family. SR subfamily.</text>
</comment>
<comment type="sequence caution" evidence="11">
    <conflict type="erroneous gene model prediction">
        <sequence resource="EMBL-CDS" id="AAC19288"/>
    </conflict>
</comment>
<comment type="sequence caution" evidence="11">
    <conflict type="erroneous gene model prediction">
        <sequence resource="EMBL-CDS" id="CAB80736"/>
    </conflict>
</comment>